<protein>
    <recommendedName>
        <fullName evidence="1">UDP-N-acetylglucosamine 1-carboxyvinyltransferase</fullName>
        <ecNumber evidence="1">2.5.1.7</ecNumber>
    </recommendedName>
    <alternativeName>
        <fullName evidence="1">Enoylpyruvate transferase</fullName>
    </alternativeName>
    <alternativeName>
        <fullName evidence="1">UDP-N-acetylglucosamine enolpyruvyl transferase</fullName>
        <shortName evidence="1">EPT</shortName>
    </alternativeName>
</protein>
<proteinExistence type="inferred from homology"/>
<reference key="1">
    <citation type="journal article" date="2007" name="Proc. Natl. Acad. Sci. U.S.A.">
        <title>Deep-sea vent epsilon-proteobacterial genomes provide insights into emergence of pathogens.</title>
        <authorList>
            <person name="Nakagawa S."/>
            <person name="Takaki Y."/>
            <person name="Shimamura S."/>
            <person name="Reysenbach A.-L."/>
            <person name="Takai K."/>
            <person name="Horikoshi K."/>
        </authorList>
    </citation>
    <scope>NUCLEOTIDE SEQUENCE [LARGE SCALE GENOMIC DNA]</scope>
    <source>
        <strain>NBC37-1</strain>
    </source>
</reference>
<dbReference type="EC" id="2.5.1.7" evidence="1"/>
<dbReference type="EMBL" id="AP009179">
    <property type="protein sequence ID" value="BAF72145.1"/>
    <property type="molecule type" value="Genomic_DNA"/>
</dbReference>
<dbReference type="RefSeq" id="WP_011980878.1">
    <property type="nucleotide sequence ID" value="NC_009663.1"/>
</dbReference>
<dbReference type="SMR" id="A6Q9I6"/>
<dbReference type="STRING" id="387093.SUN_1190"/>
<dbReference type="KEGG" id="sun:SUN_1190"/>
<dbReference type="eggNOG" id="COG0766">
    <property type="taxonomic scope" value="Bacteria"/>
</dbReference>
<dbReference type="HOGENOM" id="CLU_027387_0_0_7"/>
<dbReference type="OrthoDB" id="9803760at2"/>
<dbReference type="UniPathway" id="UPA00219"/>
<dbReference type="Proteomes" id="UP000006378">
    <property type="component" value="Chromosome"/>
</dbReference>
<dbReference type="GO" id="GO:0005737">
    <property type="term" value="C:cytoplasm"/>
    <property type="evidence" value="ECO:0007669"/>
    <property type="project" value="UniProtKB-SubCell"/>
</dbReference>
<dbReference type="GO" id="GO:0008760">
    <property type="term" value="F:UDP-N-acetylglucosamine 1-carboxyvinyltransferase activity"/>
    <property type="evidence" value="ECO:0007669"/>
    <property type="project" value="UniProtKB-UniRule"/>
</dbReference>
<dbReference type="GO" id="GO:0051301">
    <property type="term" value="P:cell division"/>
    <property type="evidence" value="ECO:0007669"/>
    <property type="project" value="UniProtKB-KW"/>
</dbReference>
<dbReference type="GO" id="GO:0071555">
    <property type="term" value="P:cell wall organization"/>
    <property type="evidence" value="ECO:0007669"/>
    <property type="project" value="UniProtKB-KW"/>
</dbReference>
<dbReference type="GO" id="GO:0009252">
    <property type="term" value="P:peptidoglycan biosynthetic process"/>
    <property type="evidence" value="ECO:0007669"/>
    <property type="project" value="UniProtKB-UniRule"/>
</dbReference>
<dbReference type="GO" id="GO:0008360">
    <property type="term" value="P:regulation of cell shape"/>
    <property type="evidence" value="ECO:0007669"/>
    <property type="project" value="UniProtKB-KW"/>
</dbReference>
<dbReference type="GO" id="GO:0019277">
    <property type="term" value="P:UDP-N-acetylgalactosamine biosynthetic process"/>
    <property type="evidence" value="ECO:0007669"/>
    <property type="project" value="InterPro"/>
</dbReference>
<dbReference type="CDD" id="cd01555">
    <property type="entry name" value="UdpNAET"/>
    <property type="match status" value="1"/>
</dbReference>
<dbReference type="FunFam" id="3.65.10.10:FF:000001">
    <property type="entry name" value="UDP-N-acetylglucosamine 1-carboxyvinyltransferase"/>
    <property type="match status" value="1"/>
</dbReference>
<dbReference type="Gene3D" id="3.65.10.10">
    <property type="entry name" value="Enolpyruvate transferase domain"/>
    <property type="match status" value="2"/>
</dbReference>
<dbReference type="HAMAP" id="MF_00111">
    <property type="entry name" value="MurA"/>
    <property type="match status" value="1"/>
</dbReference>
<dbReference type="InterPro" id="IPR001986">
    <property type="entry name" value="Enolpyruvate_Tfrase_dom"/>
</dbReference>
<dbReference type="InterPro" id="IPR036968">
    <property type="entry name" value="Enolpyruvate_Tfrase_sf"/>
</dbReference>
<dbReference type="InterPro" id="IPR050068">
    <property type="entry name" value="MurA_subfamily"/>
</dbReference>
<dbReference type="InterPro" id="IPR013792">
    <property type="entry name" value="RNA3'P_cycl/enolpyr_Trfase_a/b"/>
</dbReference>
<dbReference type="InterPro" id="IPR005750">
    <property type="entry name" value="UDP_GlcNAc_COvinyl_MurA"/>
</dbReference>
<dbReference type="NCBIfam" id="TIGR01072">
    <property type="entry name" value="murA"/>
    <property type="match status" value="1"/>
</dbReference>
<dbReference type="NCBIfam" id="NF006873">
    <property type="entry name" value="PRK09369.1"/>
    <property type="match status" value="1"/>
</dbReference>
<dbReference type="PANTHER" id="PTHR43783">
    <property type="entry name" value="UDP-N-ACETYLGLUCOSAMINE 1-CARBOXYVINYLTRANSFERASE"/>
    <property type="match status" value="1"/>
</dbReference>
<dbReference type="PANTHER" id="PTHR43783:SF1">
    <property type="entry name" value="UDP-N-ACETYLGLUCOSAMINE 1-CARBOXYVINYLTRANSFERASE"/>
    <property type="match status" value="1"/>
</dbReference>
<dbReference type="Pfam" id="PF00275">
    <property type="entry name" value="EPSP_synthase"/>
    <property type="match status" value="1"/>
</dbReference>
<dbReference type="SUPFAM" id="SSF55205">
    <property type="entry name" value="EPT/RTPC-like"/>
    <property type="match status" value="1"/>
</dbReference>
<gene>
    <name evidence="1" type="primary">murA</name>
    <name type="ordered locus">SUN_1190</name>
</gene>
<organism>
    <name type="scientific">Sulfurovum sp. (strain NBC37-1)</name>
    <dbReference type="NCBI Taxonomy" id="387093"/>
    <lineage>
        <taxon>Bacteria</taxon>
        <taxon>Pseudomonadati</taxon>
        <taxon>Campylobacterota</taxon>
        <taxon>Epsilonproteobacteria</taxon>
        <taxon>Campylobacterales</taxon>
        <taxon>Sulfurovaceae</taxon>
        <taxon>Sulfurovum</taxon>
    </lineage>
</organism>
<evidence type="ECO:0000255" key="1">
    <source>
        <dbReference type="HAMAP-Rule" id="MF_00111"/>
    </source>
</evidence>
<name>MURA_SULNB</name>
<feature type="chain" id="PRO_1000023114" description="UDP-N-acetylglucosamine 1-carboxyvinyltransferase">
    <location>
        <begin position="1"/>
        <end position="422"/>
    </location>
</feature>
<feature type="active site" description="Proton donor" evidence="1">
    <location>
        <position position="116"/>
    </location>
</feature>
<feature type="binding site" evidence="1">
    <location>
        <begin position="22"/>
        <end position="23"/>
    </location>
    <ligand>
        <name>phosphoenolpyruvate</name>
        <dbReference type="ChEBI" id="CHEBI:58702"/>
    </ligand>
</feature>
<feature type="binding site" evidence="1">
    <location>
        <position position="92"/>
    </location>
    <ligand>
        <name>UDP-N-acetyl-alpha-D-glucosamine</name>
        <dbReference type="ChEBI" id="CHEBI:57705"/>
    </ligand>
</feature>
<feature type="binding site" evidence="1">
    <location>
        <begin position="121"/>
        <end position="125"/>
    </location>
    <ligand>
        <name>UDP-N-acetyl-alpha-D-glucosamine</name>
        <dbReference type="ChEBI" id="CHEBI:57705"/>
    </ligand>
</feature>
<feature type="binding site" evidence="1">
    <location>
        <position position="307"/>
    </location>
    <ligand>
        <name>UDP-N-acetyl-alpha-D-glucosamine</name>
        <dbReference type="ChEBI" id="CHEBI:57705"/>
    </ligand>
</feature>
<feature type="binding site" evidence="1">
    <location>
        <position position="329"/>
    </location>
    <ligand>
        <name>UDP-N-acetyl-alpha-D-glucosamine</name>
        <dbReference type="ChEBI" id="CHEBI:57705"/>
    </ligand>
</feature>
<feature type="modified residue" description="2-(S-cysteinyl)pyruvic acid O-phosphothioketal" evidence="1">
    <location>
        <position position="116"/>
    </location>
</feature>
<keyword id="KW-0131">Cell cycle</keyword>
<keyword id="KW-0132">Cell division</keyword>
<keyword id="KW-0133">Cell shape</keyword>
<keyword id="KW-0961">Cell wall biogenesis/degradation</keyword>
<keyword id="KW-0963">Cytoplasm</keyword>
<keyword id="KW-0573">Peptidoglycan synthesis</keyword>
<keyword id="KW-0670">Pyruvate</keyword>
<keyword id="KW-0808">Transferase</keyword>
<accession>A6Q9I6</accession>
<comment type="function">
    <text evidence="1">Cell wall formation. Adds enolpyruvyl to UDP-N-acetylglucosamine.</text>
</comment>
<comment type="catalytic activity">
    <reaction evidence="1">
        <text>phosphoenolpyruvate + UDP-N-acetyl-alpha-D-glucosamine = UDP-N-acetyl-3-O-(1-carboxyvinyl)-alpha-D-glucosamine + phosphate</text>
        <dbReference type="Rhea" id="RHEA:18681"/>
        <dbReference type="ChEBI" id="CHEBI:43474"/>
        <dbReference type="ChEBI" id="CHEBI:57705"/>
        <dbReference type="ChEBI" id="CHEBI:58702"/>
        <dbReference type="ChEBI" id="CHEBI:68483"/>
        <dbReference type="EC" id="2.5.1.7"/>
    </reaction>
</comment>
<comment type="pathway">
    <text evidence="1">Cell wall biogenesis; peptidoglycan biosynthesis.</text>
</comment>
<comment type="subcellular location">
    <subcellularLocation>
        <location evidence="1">Cytoplasm</location>
    </subcellularLocation>
</comment>
<comment type="similarity">
    <text evidence="1">Belongs to the EPSP synthase family. MurA subfamily.</text>
</comment>
<sequence length="422" mass="44888">MQYLEIKGGKKLSGSVTISGAKNAALPVIAATILSDKDVTLTNLPNVVDIRTLLKLLTMLGGVVEHEGTVAKINNGSITSTKAVYEIVSQMRASILVLGPLLTRFGECEVSLPGGCAIGQRPIDLHLKALEAMGAKITIESGYVHAVAPNGLHGAKIIFDKITVGGTENIIMAAALAKGTTIIINAAKEPEIVQLCEMIADAGVKIEGIGTNELTIEGTDGIPLAFKTVEIIPDRIEAGTYLCAGAITKSEITLNKVNAEHIRASIDKLESMGFTFDIAKDSITIHPTDIINPVNLITIEYPGFPTDMQAQFMAVAAMADGESLIEERLFENRFMHVSELNRLGADIWLKGSVAAVKGVKELHGADVMATDLRASSALVLAGLVAEGTTNVRRIYHLDRGYDNLEGKLAALGADIVRKEEEK</sequence>